<accession>Q6DAQ9</accession>
<protein>
    <recommendedName>
        <fullName evidence="1">Argininosuccinate lyase</fullName>
        <shortName evidence="1">ASAL</shortName>
        <ecNumber evidence="1">4.3.2.1</ecNumber>
    </recommendedName>
    <alternativeName>
        <fullName evidence="1">Arginosuccinase</fullName>
    </alternativeName>
</protein>
<dbReference type="EC" id="4.3.2.1" evidence="1"/>
<dbReference type="EMBL" id="BX950851">
    <property type="protein sequence ID" value="CAG73113.1"/>
    <property type="molecule type" value="Genomic_DNA"/>
</dbReference>
<dbReference type="RefSeq" id="WP_011091833.1">
    <property type="nucleotide sequence ID" value="NC_004547.2"/>
</dbReference>
<dbReference type="SMR" id="Q6DAQ9"/>
<dbReference type="STRING" id="218491.ECA0194"/>
<dbReference type="KEGG" id="eca:ECA0194"/>
<dbReference type="PATRIC" id="fig|218491.5.peg.193"/>
<dbReference type="eggNOG" id="COG0165">
    <property type="taxonomic scope" value="Bacteria"/>
</dbReference>
<dbReference type="HOGENOM" id="CLU_027272_2_3_6"/>
<dbReference type="OrthoDB" id="9769623at2"/>
<dbReference type="UniPathway" id="UPA00068">
    <property type="reaction ID" value="UER00114"/>
</dbReference>
<dbReference type="Proteomes" id="UP000007966">
    <property type="component" value="Chromosome"/>
</dbReference>
<dbReference type="GO" id="GO:0005829">
    <property type="term" value="C:cytosol"/>
    <property type="evidence" value="ECO:0007669"/>
    <property type="project" value="TreeGrafter"/>
</dbReference>
<dbReference type="GO" id="GO:0004056">
    <property type="term" value="F:argininosuccinate lyase activity"/>
    <property type="evidence" value="ECO:0007669"/>
    <property type="project" value="UniProtKB-UniRule"/>
</dbReference>
<dbReference type="GO" id="GO:0042450">
    <property type="term" value="P:arginine biosynthetic process via ornithine"/>
    <property type="evidence" value="ECO:0007669"/>
    <property type="project" value="InterPro"/>
</dbReference>
<dbReference type="GO" id="GO:0006526">
    <property type="term" value="P:L-arginine biosynthetic process"/>
    <property type="evidence" value="ECO:0007669"/>
    <property type="project" value="UniProtKB-UniRule"/>
</dbReference>
<dbReference type="CDD" id="cd01359">
    <property type="entry name" value="Argininosuccinate_lyase"/>
    <property type="match status" value="1"/>
</dbReference>
<dbReference type="FunFam" id="1.10.40.30:FF:000001">
    <property type="entry name" value="Argininosuccinate lyase"/>
    <property type="match status" value="1"/>
</dbReference>
<dbReference type="FunFam" id="1.20.200.10:FF:000006">
    <property type="entry name" value="Argininosuccinate lyase"/>
    <property type="match status" value="1"/>
</dbReference>
<dbReference type="Gene3D" id="1.10.40.30">
    <property type="entry name" value="Fumarase/aspartase (C-terminal domain)"/>
    <property type="match status" value="1"/>
</dbReference>
<dbReference type="Gene3D" id="1.20.200.10">
    <property type="entry name" value="Fumarase/aspartase (Central domain)"/>
    <property type="match status" value="1"/>
</dbReference>
<dbReference type="Gene3D" id="1.10.275.10">
    <property type="entry name" value="Fumarase/aspartase (N-terminal domain)"/>
    <property type="match status" value="1"/>
</dbReference>
<dbReference type="HAMAP" id="MF_00006">
    <property type="entry name" value="Arg_succ_lyase"/>
    <property type="match status" value="1"/>
</dbReference>
<dbReference type="InterPro" id="IPR029419">
    <property type="entry name" value="Arg_succ_lyase_C"/>
</dbReference>
<dbReference type="InterPro" id="IPR009049">
    <property type="entry name" value="Argininosuccinate_lyase"/>
</dbReference>
<dbReference type="InterPro" id="IPR024083">
    <property type="entry name" value="Fumarase/histidase_N"/>
</dbReference>
<dbReference type="InterPro" id="IPR020557">
    <property type="entry name" value="Fumarate_lyase_CS"/>
</dbReference>
<dbReference type="InterPro" id="IPR000362">
    <property type="entry name" value="Fumarate_lyase_fam"/>
</dbReference>
<dbReference type="InterPro" id="IPR022761">
    <property type="entry name" value="Fumarate_lyase_N"/>
</dbReference>
<dbReference type="InterPro" id="IPR008948">
    <property type="entry name" value="L-Aspartase-like"/>
</dbReference>
<dbReference type="NCBIfam" id="TIGR00838">
    <property type="entry name" value="argH"/>
    <property type="match status" value="1"/>
</dbReference>
<dbReference type="NCBIfam" id="NF008964">
    <property type="entry name" value="PRK12308.1"/>
    <property type="match status" value="1"/>
</dbReference>
<dbReference type="PANTHER" id="PTHR43814">
    <property type="entry name" value="ARGININOSUCCINATE LYASE"/>
    <property type="match status" value="1"/>
</dbReference>
<dbReference type="PANTHER" id="PTHR43814:SF1">
    <property type="entry name" value="ARGININOSUCCINATE LYASE"/>
    <property type="match status" value="1"/>
</dbReference>
<dbReference type="Pfam" id="PF14698">
    <property type="entry name" value="ASL_C2"/>
    <property type="match status" value="1"/>
</dbReference>
<dbReference type="Pfam" id="PF00206">
    <property type="entry name" value="Lyase_1"/>
    <property type="match status" value="1"/>
</dbReference>
<dbReference type="PRINTS" id="PR00145">
    <property type="entry name" value="ARGSUCLYASE"/>
</dbReference>
<dbReference type="PRINTS" id="PR00149">
    <property type="entry name" value="FUMRATELYASE"/>
</dbReference>
<dbReference type="SUPFAM" id="SSF48557">
    <property type="entry name" value="L-aspartase-like"/>
    <property type="match status" value="1"/>
</dbReference>
<dbReference type="PROSITE" id="PS00163">
    <property type="entry name" value="FUMARATE_LYASES"/>
    <property type="match status" value="1"/>
</dbReference>
<reference key="1">
    <citation type="journal article" date="2004" name="Proc. Natl. Acad. Sci. U.S.A.">
        <title>Genome sequence of the enterobacterial phytopathogen Erwinia carotovora subsp. atroseptica and characterization of virulence factors.</title>
        <authorList>
            <person name="Bell K.S."/>
            <person name="Sebaihia M."/>
            <person name="Pritchard L."/>
            <person name="Holden M.T.G."/>
            <person name="Hyman L.J."/>
            <person name="Holeva M.C."/>
            <person name="Thomson N.R."/>
            <person name="Bentley S.D."/>
            <person name="Churcher L.J.C."/>
            <person name="Mungall K."/>
            <person name="Atkin R."/>
            <person name="Bason N."/>
            <person name="Brooks K."/>
            <person name="Chillingworth T."/>
            <person name="Clark K."/>
            <person name="Doggett J."/>
            <person name="Fraser A."/>
            <person name="Hance Z."/>
            <person name="Hauser H."/>
            <person name="Jagels K."/>
            <person name="Moule S."/>
            <person name="Norbertczak H."/>
            <person name="Ormond D."/>
            <person name="Price C."/>
            <person name="Quail M.A."/>
            <person name="Sanders M."/>
            <person name="Walker D."/>
            <person name="Whitehead S."/>
            <person name="Salmond G.P.C."/>
            <person name="Birch P.R.J."/>
            <person name="Parkhill J."/>
            <person name="Toth I.K."/>
        </authorList>
    </citation>
    <scope>NUCLEOTIDE SEQUENCE [LARGE SCALE GENOMIC DNA]</scope>
    <source>
        <strain>SCRI 1043 / ATCC BAA-672</strain>
    </source>
</reference>
<keyword id="KW-0028">Amino-acid biosynthesis</keyword>
<keyword id="KW-0055">Arginine biosynthesis</keyword>
<keyword id="KW-0963">Cytoplasm</keyword>
<keyword id="KW-0456">Lyase</keyword>
<keyword id="KW-1185">Reference proteome</keyword>
<comment type="catalytic activity">
    <reaction evidence="1">
        <text>2-(N(omega)-L-arginino)succinate = fumarate + L-arginine</text>
        <dbReference type="Rhea" id="RHEA:24020"/>
        <dbReference type="ChEBI" id="CHEBI:29806"/>
        <dbReference type="ChEBI" id="CHEBI:32682"/>
        <dbReference type="ChEBI" id="CHEBI:57472"/>
        <dbReference type="EC" id="4.3.2.1"/>
    </reaction>
</comment>
<comment type="pathway">
    <text evidence="1">Amino-acid biosynthesis; L-arginine biosynthesis; L-arginine from L-ornithine and carbamoyl phosphate: step 3/3.</text>
</comment>
<comment type="subcellular location">
    <subcellularLocation>
        <location evidence="1">Cytoplasm</location>
    </subcellularLocation>
</comment>
<comment type="similarity">
    <text evidence="1">Belongs to the lyase 1 family. Argininosuccinate lyase subfamily.</text>
</comment>
<organism>
    <name type="scientific">Pectobacterium atrosepticum (strain SCRI 1043 / ATCC BAA-672)</name>
    <name type="common">Erwinia carotovora subsp. atroseptica</name>
    <dbReference type="NCBI Taxonomy" id="218491"/>
    <lineage>
        <taxon>Bacteria</taxon>
        <taxon>Pseudomonadati</taxon>
        <taxon>Pseudomonadota</taxon>
        <taxon>Gammaproteobacteria</taxon>
        <taxon>Enterobacterales</taxon>
        <taxon>Pectobacteriaceae</taxon>
        <taxon>Pectobacterium</taxon>
    </lineage>
</organism>
<proteinExistence type="inferred from homology"/>
<sequence length="457" mass="50473">MALWGGRFSQAADQRFKQFNDSLRFDYRLAEQDIVGSIGWSKALVTVNVLSEQEQQQLEQALDALLVEVQADPEMILQSDAEDIHSWVELRLIEKVGDLGKKLHTGRSRNDQVATDLKLWCKAQIAELLLSVRQLRQALVTTAEANQDAVMPGYTHLQRAQPVTFAHWCLAYHEMLTRDESRLEDTLKRLDVSPLGCGALAGTAYPIDREQLADWLGFASATRNSLDTVSDRDHVLELLSNASIGMVHLSRFAEDLIFFNSGEAAFVELSDRVTSGSSLMPQKKNPDALELIRGKCGRVQGALTGMMMTLKGLPLAYNKDMQEDKEGLFDALDTWHDCLMMAGLVLEGIQVKRPRCKEAAEQGYANSTELADYLVAKGVPFREAHHIVGEAVVEAIRQGKALEALPLADLQKFSAVIGDDVYPILALQSCLDKRAAQGGVSPQQVAKAISDAKQRLA</sequence>
<name>ARLY_PECAS</name>
<feature type="chain" id="PRO_0000137771" description="Argininosuccinate lyase">
    <location>
        <begin position="1"/>
        <end position="457"/>
    </location>
</feature>
<gene>
    <name evidence="1" type="primary">argH</name>
    <name type="ordered locus">ECA0194</name>
</gene>
<evidence type="ECO:0000255" key="1">
    <source>
        <dbReference type="HAMAP-Rule" id="MF_00006"/>
    </source>
</evidence>